<sequence length="61" mass="7057">MAKKSMIAKAQRKPKFQVRAYTRCRICGRPHSVYRDFGLCRVCLRKMASEGLIPGLRKASW</sequence>
<keyword id="KW-0479">Metal-binding</keyword>
<keyword id="KW-0687">Ribonucleoprotein</keyword>
<keyword id="KW-0689">Ribosomal protein</keyword>
<keyword id="KW-0694">RNA-binding</keyword>
<keyword id="KW-0699">rRNA-binding</keyword>
<keyword id="KW-0862">Zinc</keyword>
<dbReference type="EMBL" id="AE001439">
    <property type="protein sequence ID" value="AAD06792.1"/>
    <property type="molecule type" value="Genomic_DNA"/>
</dbReference>
<dbReference type="PIR" id="B71834">
    <property type="entry name" value="B71834"/>
</dbReference>
<dbReference type="RefSeq" id="WP_001085692.1">
    <property type="nucleotide sequence ID" value="NC_000921.1"/>
</dbReference>
<dbReference type="SMR" id="Q9ZJS5"/>
<dbReference type="KEGG" id="hpj:jhp_1226"/>
<dbReference type="eggNOG" id="COG0199">
    <property type="taxonomic scope" value="Bacteria"/>
</dbReference>
<dbReference type="Proteomes" id="UP000000804">
    <property type="component" value="Chromosome"/>
</dbReference>
<dbReference type="GO" id="GO:0005737">
    <property type="term" value="C:cytoplasm"/>
    <property type="evidence" value="ECO:0007669"/>
    <property type="project" value="UniProtKB-ARBA"/>
</dbReference>
<dbReference type="GO" id="GO:0015935">
    <property type="term" value="C:small ribosomal subunit"/>
    <property type="evidence" value="ECO:0007669"/>
    <property type="project" value="TreeGrafter"/>
</dbReference>
<dbReference type="GO" id="GO:0019843">
    <property type="term" value="F:rRNA binding"/>
    <property type="evidence" value="ECO:0007669"/>
    <property type="project" value="UniProtKB-UniRule"/>
</dbReference>
<dbReference type="GO" id="GO:0003735">
    <property type="term" value="F:structural constituent of ribosome"/>
    <property type="evidence" value="ECO:0007669"/>
    <property type="project" value="InterPro"/>
</dbReference>
<dbReference type="GO" id="GO:0008270">
    <property type="term" value="F:zinc ion binding"/>
    <property type="evidence" value="ECO:0007669"/>
    <property type="project" value="UniProtKB-UniRule"/>
</dbReference>
<dbReference type="GO" id="GO:0006412">
    <property type="term" value="P:translation"/>
    <property type="evidence" value="ECO:0007669"/>
    <property type="project" value="UniProtKB-UniRule"/>
</dbReference>
<dbReference type="FunFam" id="4.10.830.10:FF:000001">
    <property type="entry name" value="30S ribosomal protein S14 type Z"/>
    <property type="match status" value="1"/>
</dbReference>
<dbReference type="Gene3D" id="4.10.830.10">
    <property type="entry name" value="30s Ribosomal Protein S14, Chain N"/>
    <property type="match status" value="1"/>
</dbReference>
<dbReference type="HAMAP" id="MF_01364_B">
    <property type="entry name" value="Ribosomal_uS14_2_B"/>
    <property type="match status" value="1"/>
</dbReference>
<dbReference type="InterPro" id="IPR001209">
    <property type="entry name" value="Ribosomal_uS14"/>
</dbReference>
<dbReference type="InterPro" id="IPR023053">
    <property type="entry name" value="Ribosomal_uS14_bact"/>
</dbReference>
<dbReference type="InterPro" id="IPR018271">
    <property type="entry name" value="Ribosomal_uS14_CS"/>
</dbReference>
<dbReference type="InterPro" id="IPR043140">
    <property type="entry name" value="Ribosomal_uS14_sf"/>
</dbReference>
<dbReference type="NCBIfam" id="NF005974">
    <property type="entry name" value="PRK08061.1"/>
    <property type="match status" value="1"/>
</dbReference>
<dbReference type="PANTHER" id="PTHR19836">
    <property type="entry name" value="30S RIBOSOMAL PROTEIN S14"/>
    <property type="match status" value="1"/>
</dbReference>
<dbReference type="PANTHER" id="PTHR19836:SF19">
    <property type="entry name" value="SMALL RIBOSOMAL SUBUNIT PROTEIN US14M"/>
    <property type="match status" value="1"/>
</dbReference>
<dbReference type="Pfam" id="PF00253">
    <property type="entry name" value="Ribosomal_S14"/>
    <property type="match status" value="1"/>
</dbReference>
<dbReference type="SUPFAM" id="SSF57716">
    <property type="entry name" value="Glucocorticoid receptor-like (DNA-binding domain)"/>
    <property type="match status" value="1"/>
</dbReference>
<dbReference type="PROSITE" id="PS00527">
    <property type="entry name" value="RIBOSOMAL_S14"/>
    <property type="match status" value="1"/>
</dbReference>
<accession>Q9ZJS5</accession>
<organism>
    <name type="scientific">Helicobacter pylori (strain J99 / ATCC 700824)</name>
    <name type="common">Campylobacter pylori J99</name>
    <dbReference type="NCBI Taxonomy" id="85963"/>
    <lineage>
        <taxon>Bacteria</taxon>
        <taxon>Pseudomonadati</taxon>
        <taxon>Campylobacterota</taxon>
        <taxon>Epsilonproteobacteria</taxon>
        <taxon>Campylobacterales</taxon>
        <taxon>Helicobacteraceae</taxon>
        <taxon>Helicobacter</taxon>
    </lineage>
</organism>
<protein>
    <recommendedName>
        <fullName evidence="1">Small ribosomal subunit protein uS14</fullName>
    </recommendedName>
    <alternativeName>
        <fullName evidence="2">30S ribosomal protein S14 type Z</fullName>
    </alternativeName>
</protein>
<gene>
    <name evidence="1" type="primary">rpsZ</name>
    <name evidence="1" type="synonym">rpsN</name>
    <name type="ordered locus">jhp_1226</name>
</gene>
<name>RS14Z_HELPJ</name>
<evidence type="ECO:0000255" key="1">
    <source>
        <dbReference type="HAMAP-Rule" id="MF_01364"/>
    </source>
</evidence>
<evidence type="ECO:0000305" key="2"/>
<reference key="1">
    <citation type="journal article" date="1999" name="Nature">
        <title>Genomic sequence comparison of two unrelated isolates of the human gastric pathogen Helicobacter pylori.</title>
        <authorList>
            <person name="Alm R.A."/>
            <person name="Ling L.-S.L."/>
            <person name="Moir D.T."/>
            <person name="King B.L."/>
            <person name="Brown E.D."/>
            <person name="Doig P.C."/>
            <person name="Smith D.R."/>
            <person name="Noonan B."/>
            <person name="Guild B.C."/>
            <person name="deJonge B.L."/>
            <person name="Carmel G."/>
            <person name="Tummino P.J."/>
            <person name="Caruso A."/>
            <person name="Uria-Nickelsen M."/>
            <person name="Mills D.M."/>
            <person name="Ives C."/>
            <person name="Gibson R."/>
            <person name="Merberg D."/>
            <person name="Mills S.D."/>
            <person name="Jiang Q."/>
            <person name="Taylor D.E."/>
            <person name="Vovis G.F."/>
            <person name="Trust T.J."/>
        </authorList>
    </citation>
    <scope>NUCLEOTIDE SEQUENCE [LARGE SCALE GENOMIC DNA]</scope>
    <source>
        <strain>J99 / ATCC 700824</strain>
    </source>
</reference>
<proteinExistence type="inferred from homology"/>
<feature type="chain" id="PRO_0000130895" description="Small ribosomal subunit protein uS14">
    <location>
        <begin position="1"/>
        <end position="61"/>
    </location>
</feature>
<feature type="binding site" evidence="1">
    <location>
        <position position="24"/>
    </location>
    <ligand>
        <name>Zn(2+)</name>
        <dbReference type="ChEBI" id="CHEBI:29105"/>
    </ligand>
</feature>
<feature type="binding site" evidence="1">
    <location>
        <position position="27"/>
    </location>
    <ligand>
        <name>Zn(2+)</name>
        <dbReference type="ChEBI" id="CHEBI:29105"/>
    </ligand>
</feature>
<feature type="binding site" evidence="1">
    <location>
        <position position="40"/>
    </location>
    <ligand>
        <name>Zn(2+)</name>
        <dbReference type="ChEBI" id="CHEBI:29105"/>
    </ligand>
</feature>
<feature type="binding site" evidence="1">
    <location>
        <position position="43"/>
    </location>
    <ligand>
        <name>Zn(2+)</name>
        <dbReference type="ChEBI" id="CHEBI:29105"/>
    </ligand>
</feature>
<comment type="function">
    <text evidence="1">Binds 16S rRNA, required for the assembly of 30S particles and may also be responsible for determining the conformation of the 16S rRNA at the A site.</text>
</comment>
<comment type="cofactor">
    <cofactor evidence="1">
        <name>Zn(2+)</name>
        <dbReference type="ChEBI" id="CHEBI:29105"/>
    </cofactor>
    <text evidence="1">Binds 1 zinc ion per subunit.</text>
</comment>
<comment type="subunit">
    <text evidence="1">Part of the 30S ribosomal subunit. Contacts proteins S3 and S10.</text>
</comment>
<comment type="similarity">
    <text evidence="1">Belongs to the universal ribosomal protein uS14 family. Zinc-binding uS14 subfamily.</text>
</comment>